<accession>P48817</accession>
<evidence type="ECO:0000250" key="1"/>
<evidence type="ECO:0000305" key="2"/>
<gene>
    <name type="primary">NDK</name>
</gene>
<protein>
    <recommendedName>
        <fullName>Nucleoside diphosphate kinase</fullName>
        <shortName>NDK</shortName>
        <shortName>NDP kinase</shortName>
        <ecNumber>2.7.4.6</ecNumber>
    </recommendedName>
</protein>
<keyword id="KW-0067">ATP-binding</keyword>
<keyword id="KW-0963">Cytoplasm</keyword>
<keyword id="KW-0418">Kinase</keyword>
<keyword id="KW-0460">Magnesium</keyword>
<keyword id="KW-0479">Metal-binding</keyword>
<keyword id="KW-0546">Nucleotide metabolism</keyword>
<keyword id="KW-0547">Nucleotide-binding</keyword>
<keyword id="KW-0597">Phosphoprotein</keyword>
<keyword id="KW-1185">Reference proteome</keyword>
<keyword id="KW-0808">Transferase</keyword>
<reference key="1">
    <citation type="journal article" date="1995" name="Gene">
        <title>Nucleoside diphosphate kinase from the parasitic nematode Brugia malayi.</title>
        <authorList>
            <person name="Ghosh I."/>
            <person name="Raghavan N."/>
            <person name="Fitzgerald P.C."/>
            <person name="Scott A.L."/>
        </authorList>
    </citation>
    <scope>NUCLEOTIDE SEQUENCE [MRNA]</scope>
</reference>
<proteinExistence type="evidence at transcript level"/>
<dbReference type="EC" id="2.7.4.6"/>
<dbReference type="EMBL" id="U18906">
    <property type="protein sequence ID" value="AAA90988.1"/>
    <property type="molecule type" value="mRNA"/>
</dbReference>
<dbReference type="PIR" id="JC4359">
    <property type="entry name" value="JC4359"/>
</dbReference>
<dbReference type="SMR" id="P48817"/>
<dbReference type="FunCoup" id="P48817">
    <property type="interactions" value="1451"/>
</dbReference>
<dbReference type="STRING" id="6279.P48817"/>
<dbReference type="EnsemblMetazoa" id="Bm13781b.1">
    <property type="protein sequence ID" value="Bm13781b.1"/>
    <property type="gene ID" value="WBGene00234042"/>
</dbReference>
<dbReference type="HOGENOM" id="CLU_060216_6_3_1"/>
<dbReference type="InParanoid" id="P48817"/>
<dbReference type="Proteomes" id="UP000006672">
    <property type="component" value="Unassembled WGS sequence"/>
</dbReference>
<dbReference type="GO" id="GO:0005737">
    <property type="term" value="C:cytoplasm"/>
    <property type="evidence" value="ECO:0007669"/>
    <property type="project" value="UniProtKB-SubCell"/>
</dbReference>
<dbReference type="GO" id="GO:0005524">
    <property type="term" value="F:ATP binding"/>
    <property type="evidence" value="ECO:0007669"/>
    <property type="project" value="UniProtKB-KW"/>
</dbReference>
<dbReference type="GO" id="GO:0046872">
    <property type="term" value="F:metal ion binding"/>
    <property type="evidence" value="ECO:0007669"/>
    <property type="project" value="UniProtKB-KW"/>
</dbReference>
<dbReference type="GO" id="GO:0004550">
    <property type="term" value="F:nucleoside diphosphate kinase activity"/>
    <property type="evidence" value="ECO:0007669"/>
    <property type="project" value="UniProtKB-EC"/>
</dbReference>
<dbReference type="GO" id="GO:0006241">
    <property type="term" value="P:CTP biosynthetic process"/>
    <property type="evidence" value="ECO:0007669"/>
    <property type="project" value="InterPro"/>
</dbReference>
<dbReference type="GO" id="GO:0006183">
    <property type="term" value="P:GTP biosynthetic process"/>
    <property type="evidence" value="ECO:0007669"/>
    <property type="project" value="InterPro"/>
</dbReference>
<dbReference type="GO" id="GO:0006228">
    <property type="term" value="P:UTP biosynthetic process"/>
    <property type="evidence" value="ECO:0007669"/>
    <property type="project" value="InterPro"/>
</dbReference>
<dbReference type="CDD" id="cd04413">
    <property type="entry name" value="NDPk_I"/>
    <property type="match status" value="1"/>
</dbReference>
<dbReference type="FunFam" id="3.30.70.141:FF:000002">
    <property type="entry name" value="Nucleoside diphosphate kinase"/>
    <property type="match status" value="1"/>
</dbReference>
<dbReference type="Gene3D" id="3.30.70.141">
    <property type="entry name" value="Nucleoside diphosphate kinase-like domain"/>
    <property type="match status" value="1"/>
</dbReference>
<dbReference type="HAMAP" id="MF_00451">
    <property type="entry name" value="NDP_kinase"/>
    <property type="match status" value="1"/>
</dbReference>
<dbReference type="InterPro" id="IPR034907">
    <property type="entry name" value="NDK-like_dom"/>
</dbReference>
<dbReference type="InterPro" id="IPR036850">
    <property type="entry name" value="NDK-like_dom_sf"/>
</dbReference>
<dbReference type="InterPro" id="IPR001564">
    <property type="entry name" value="Nucleoside_diP_kinase"/>
</dbReference>
<dbReference type="InterPro" id="IPR023005">
    <property type="entry name" value="Nucleoside_diP_kinase_AS"/>
</dbReference>
<dbReference type="NCBIfam" id="NF001908">
    <property type="entry name" value="PRK00668.1"/>
    <property type="match status" value="1"/>
</dbReference>
<dbReference type="PANTHER" id="PTHR11349">
    <property type="entry name" value="NUCLEOSIDE DIPHOSPHATE KINASE"/>
    <property type="match status" value="1"/>
</dbReference>
<dbReference type="Pfam" id="PF00334">
    <property type="entry name" value="NDK"/>
    <property type="match status" value="1"/>
</dbReference>
<dbReference type="PRINTS" id="PR01243">
    <property type="entry name" value="NUCDPKINASE"/>
</dbReference>
<dbReference type="SMART" id="SM00562">
    <property type="entry name" value="NDK"/>
    <property type="match status" value="1"/>
</dbReference>
<dbReference type="SUPFAM" id="SSF54919">
    <property type="entry name" value="Nucleoside diphosphate kinase, NDK"/>
    <property type="match status" value="1"/>
</dbReference>
<dbReference type="PROSITE" id="PS00469">
    <property type="entry name" value="NDPK"/>
    <property type="match status" value="1"/>
</dbReference>
<dbReference type="PROSITE" id="PS51374">
    <property type="entry name" value="NDPK_LIKE"/>
    <property type="match status" value="1"/>
</dbReference>
<name>NDK_BRUMA</name>
<organism>
    <name type="scientific">Brugia malayi</name>
    <name type="common">Filarial nematode worm</name>
    <dbReference type="NCBI Taxonomy" id="6279"/>
    <lineage>
        <taxon>Eukaryota</taxon>
        <taxon>Metazoa</taxon>
        <taxon>Ecdysozoa</taxon>
        <taxon>Nematoda</taxon>
        <taxon>Chromadorea</taxon>
        <taxon>Rhabditida</taxon>
        <taxon>Spirurina</taxon>
        <taxon>Spiruromorpha</taxon>
        <taxon>Filarioidea</taxon>
        <taxon>Onchocercidae</taxon>
        <taxon>Brugia</taxon>
    </lineage>
</organism>
<sequence>MSNTKERTFICIKPDAVQRGLIGKIFERFEQRGYKLVAMKMLKATKSHLEIHYQELQGKPFFNDLVGYMSSGPVIAMVWEGLDVVKQARQMLGATNPLNSMPGTIRGDFSIQTGRNIVHGSDSLPSAEREITHWFKPEELCEWSSATATWVYE</sequence>
<comment type="function">
    <text>Major role in the synthesis of nucleoside triphosphates other than ATP. The ATP gamma phosphate is transferred to the NDP beta phosphate via a ping-pong mechanism, using a phosphorylated active-site intermediate.</text>
</comment>
<comment type="catalytic activity">
    <reaction>
        <text>a 2'-deoxyribonucleoside 5'-diphosphate + ATP = a 2'-deoxyribonucleoside 5'-triphosphate + ADP</text>
        <dbReference type="Rhea" id="RHEA:44640"/>
        <dbReference type="ChEBI" id="CHEBI:30616"/>
        <dbReference type="ChEBI" id="CHEBI:61560"/>
        <dbReference type="ChEBI" id="CHEBI:73316"/>
        <dbReference type="ChEBI" id="CHEBI:456216"/>
        <dbReference type="EC" id="2.7.4.6"/>
    </reaction>
</comment>
<comment type="catalytic activity">
    <reaction>
        <text>a ribonucleoside 5'-diphosphate + ATP = a ribonucleoside 5'-triphosphate + ADP</text>
        <dbReference type="Rhea" id="RHEA:18113"/>
        <dbReference type="ChEBI" id="CHEBI:30616"/>
        <dbReference type="ChEBI" id="CHEBI:57930"/>
        <dbReference type="ChEBI" id="CHEBI:61557"/>
        <dbReference type="ChEBI" id="CHEBI:456216"/>
        <dbReference type="EC" id="2.7.4.6"/>
    </reaction>
</comment>
<comment type="cofactor">
    <cofactor evidence="1">
        <name>Mg(2+)</name>
        <dbReference type="ChEBI" id="CHEBI:18420"/>
    </cofactor>
</comment>
<comment type="subunit">
    <text evidence="1">Homohexamer.</text>
</comment>
<comment type="subcellular location">
    <subcellularLocation>
        <location evidence="1">Cytoplasm</location>
    </subcellularLocation>
</comment>
<comment type="similarity">
    <text evidence="2">Belongs to the NDK family.</text>
</comment>
<feature type="chain" id="PRO_0000137106" description="Nucleoside diphosphate kinase">
    <location>
        <begin position="1"/>
        <end position="153"/>
    </location>
</feature>
<feature type="active site" description="Pros-phosphohistidine intermediate" evidence="1">
    <location>
        <position position="119"/>
    </location>
</feature>
<feature type="binding site" evidence="1">
    <location>
        <position position="13"/>
    </location>
    <ligand>
        <name>ATP</name>
        <dbReference type="ChEBI" id="CHEBI:30616"/>
    </ligand>
</feature>
<feature type="binding site" evidence="1">
    <location>
        <position position="61"/>
    </location>
    <ligand>
        <name>ATP</name>
        <dbReference type="ChEBI" id="CHEBI:30616"/>
    </ligand>
</feature>
<feature type="binding site" evidence="1">
    <location>
        <position position="89"/>
    </location>
    <ligand>
        <name>ATP</name>
        <dbReference type="ChEBI" id="CHEBI:30616"/>
    </ligand>
</feature>
<feature type="binding site" evidence="1">
    <location>
        <position position="95"/>
    </location>
    <ligand>
        <name>ATP</name>
        <dbReference type="ChEBI" id="CHEBI:30616"/>
    </ligand>
</feature>
<feature type="binding site" evidence="1">
    <location>
        <position position="106"/>
    </location>
    <ligand>
        <name>ATP</name>
        <dbReference type="ChEBI" id="CHEBI:30616"/>
    </ligand>
</feature>
<feature type="binding site" evidence="1">
    <location>
        <position position="116"/>
    </location>
    <ligand>
        <name>ATP</name>
        <dbReference type="ChEBI" id="CHEBI:30616"/>
    </ligand>
</feature>